<reference key="1">
    <citation type="journal article" date="1985" name="J. Virol.">
        <title>Nucleotide sequence of a cloned woodchuck hepatitis virus genome: evolutional relationship between hepadnaviruses.</title>
        <authorList>
            <person name="Kodama K."/>
            <person name="Ogasawara N."/>
            <person name="Yoshikawa H."/>
            <person name="Murakami S."/>
        </authorList>
    </citation>
    <scope>NUCLEOTIDE SEQUENCE [GENOMIC DNA]</scope>
</reference>
<accession>P06433</accession>
<feature type="chain" id="PRO_0000222324" description="Capsid protein">
    <location>
        <begin position="1"/>
        <end position="187"/>
    </location>
</feature>
<feature type="repeat" description="1; half-length">
    <location>
        <begin position="159"/>
        <end position="165"/>
    </location>
</feature>
<feature type="repeat" description="2">
    <location>
        <begin position="166"/>
        <end position="173"/>
    </location>
</feature>
<feature type="repeat" description="3">
    <location>
        <begin position="174"/>
        <end position="181"/>
    </location>
</feature>
<feature type="region of interest" description="Disordered" evidence="2">
    <location>
        <begin position="150"/>
        <end position="187"/>
    </location>
</feature>
<feature type="region of interest" description="3 X 8 AA repeats of S-P-R-R-R-[PR]-S-Q">
    <location>
        <begin position="159"/>
        <end position="181"/>
    </location>
</feature>
<feature type="region of interest" description="RNA binding" evidence="1">
    <location>
        <begin position="181"/>
        <end position="187"/>
    </location>
</feature>
<feature type="short sequence motif" description="Bipartite nuclear localization signal" evidence="1">
    <location>
        <begin position="162"/>
        <end position="179"/>
    </location>
</feature>
<feature type="compositionally biased region" description="Basic residues" evidence="2">
    <location>
        <begin position="158"/>
        <end position="180"/>
    </location>
</feature>
<feature type="modified residue" description="Phosphoserine; by host" evidence="1">
    <location>
        <position position="159"/>
    </location>
</feature>
<feature type="modified residue" description="Phosphoserine; by host" evidence="1">
    <location>
        <position position="166"/>
    </location>
</feature>
<feature type="modified residue" description="Phosphoserine; by host" evidence="1">
    <location>
        <position position="174"/>
    </location>
</feature>
<proteinExistence type="inferred from homology"/>
<gene>
    <name evidence="1" type="primary">C</name>
</gene>
<keyword id="KW-0024">Alternative initiation</keyword>
<keyword id="KW-0167">Capsid protein</keyword>
<keyword id="KW-1176">Cytoplasmic inwards viral transport</keyword>
<keyword id="KW-0238">DNA-binding</keyword>
<keyword id="KW-1035">Host cytoplasm</keyword>
<keyword id="KW-0945">Host-virus interaction</keyword>
<keyword id="KW-1177">Microtubular inwards viral transport</keyword>
<keyword id="KW-0597">Phosphoprotein</keyword>
<keyword id="KW-0677">Repeat</keyword>
<keyword id="KW-0694">RNA-binding</keyword>
<keyword id="KW-1144">T=4 icosahedral capsid protein</keyword>
<keyword id="KW-1163">Viral penetration into host nucleus</keyword>
<keyword id="KW-0946">Virion</keyword>
<keyword id="KW-1160">Virus entry into host cell</keyword>
<comment type="function">
    <text evidence="1">Self assembles to form an icosahedral capsid. Most capsids appear to be large particles with an icosahedral symmetry of T=4 and consist of 240 copies of capsid protein, though a fraction forms smaller T=3 particles consisting of 180 capsid proteins. Entering capsids are transported along microtubules to the nucleus. Phosphorylation of the capsid is thought to induce exposure of nuclear localization signal in the C-terminal portion of the capsid protein that allows binding to the nuclear pore complex via the importin (karyopherin-) alpha and beta. Capsids are imported in intact form through the nuclear pore into the nuclear basket, where it probably binds NUP153. Only capsids that contain the mature viral genome can release the viral DNA and capsid protein into the nucleoplasm. Immature capsids get stuck in the basket. Capsids encapsulate the pre-genomic RNA and the P protein. Pre-genomic RNA is reverse-transcribed into DNA while the capsid is still in the cytoplasm. The capsid can then either be directed to the nucleus, providing more genomes for transcription, or bud through the endoplasmic reticulum to provide new virions.</text>
</comment>
<comment type="subunit">
    <text evidence="1">Homodimerizes, then multimerizes. Interacts with cytosol exposed regions of viral L glycoprotein present in the reticulum-to-Golgi compartment. Interacts with human FLNB. Phosphorylated form interacts with host importin alpha; this interaction depends on the exposure of the NLS, which itself depends upon genome maturation and/or phosphorylation of the capsid protein. Interacts with host NUP153.</text>
</comment>
<comment type="subcellular location">
    <subcellularLocation>
        <location evidence="1">Virion</location>
    </subcellularLocation>
    <subcellularLocation>
        <location evidence="1">Host cytoplasm</location>
    </subcellularLocation>
</comment>
<comment type="alternative products">
    <event type="alternative initiation"/>
    <isoform>
        <id>P06433-1</id>
        <name>Capsid protein</name>
        <sequence type="displayed"/>
    </isoform>
    <isoform>
        <id>P0C6J3-1</id>
        <name>External core antigen</name>
        <sequence type="external"/>
    </isoform>
</comment>
<comment type="PTM">
    <text evidence="1">Phosphorylated by host SRPK1, SRPK2, and maybe protein kinase C or GAPDH. Phosphorylation is critical for pregenomic RNA packaging. Protein kinase C phosphorylation is stimulated by HBx protein and may play a role in transport of the viral genome to the nucleus at the late step during the viral replication cycle.</text>
</comment>
<comment type="similarity">
    <text evidence="1">Belongs to the orthohepadnavirus core antigen family.</text>
</comment>
<sequence>MDIDPYKEFGSSYQLLNFLPLDFFPDLNALVDTATALYEEELTGREHCSPHHTAIRQALVCWDELTKLIAWMSSNITSEQVRTIIVNHVNDTWGLKVRQSLWFHLSCLTFGQHTVQEFLVSFVVWIRTPAPYRPPNAPILSTLPEHTVIRRGGARASRSPRRRTPSPRRRRSQSPRRRRSQSPSANC</sequence>
<organismHost>
    <name type="scientific">Marmota monax</name>
    <name type="common">Woodchuck</name>
    <dbReference type="NCBI Taxonomy" id="9995"/>
</organismHost>
<organism>
    <name type="scientific">Woodchuck hepatitis B virus (isolate 2)</name>
    <name type="common">WHV</name>
    <dbReference type="NCBI Taxonomy" id="341946"/>
    <lineage>
        <taxon>Viruses</taxon>
        <taxon>Riboviria</taxon>
        <taxon>Pararnavirae</taxon>
        <taxon>Artverviricota</taxon>
        <taxon>Revtraviricetes</taxon>
        <taxon>Blubervirales</taxon>
        <taxon>Hepadnaviridae</taxon>
        <taxon>Orthohepadnavirus</taxon>
        <taxon>Woodchuck hepatitis virus</taxon>
    </lineage>
</organism>
<dbReference type="EMBL" id="M11082">
    <property type="protein sequence ID" value="AAA19185.1"/>
    <property type="molecule type" value="Unassigned_DNA"/>
</dbReference>
<dbReference type="PIR" id="A03714">
    <property type="entry name" value="NKVLC2"/>
</dbReference>
<dbReference type="SMR" id="P06433"/>
<dbReference type="Proteomes" id="UP000007632">
    <property type="component" value="Genome"/>
</dbReference>
<dbReference type="GO" id="GO:0043657">
    <property type="term" value="C:host cell"/>
    <property type="evidence" value="ECO:0007669"/>
    <property type="project" value="GOC"/>
</dbReference>
<dbReference type="GO" id="GO:0030430">
    <property type="term" value="C:host cell cytoplasm"/>
    <property type="evidence" value="ECO:0007669"/>
    <property type="project" value="UniProtKB-SubCell"/>
</dbReference>
<dbReference type="GO" id="GO:0039619">
    <property type="term" value="C:T=4 icosahedral viral capsid"/>
    <property type="evidence" value="ECO:0007669"/>
    <property type="project" value="UniProtKB-UniRule"/>
</dbReference>
<dbReference type="GO" id="GO:0003677">
    <property type="term" value="F:DNA binding"/>
    <property type="evidence" value="ECO:0007669"/>
    <property type="project" value="UniProtKB-UniRule"/>
</dbReference>
<dbReference type="GO" id="GO:0003723">
    <property type="term" value="F:RNA binding"/>
    <property type="evidence" value="ECO:0007669"/>
    <property type="project" value="UniProtKB-UniRule"/>
</dbReference>
<dbReference type="GO" id="GO:0005198">
    <property type="term" value="F:structural molecule activity"/>
    <property type="evidence" value="ECO:0007669"/>
    <property type="project" value="UniProtKB-UniRule"/>
</dbReference>
<dbReference type="GO" id="GO:0075521">
    <property type="term" value="P:microtubule-dependent intracellular transport of viral material towards nucleus"/>
    <property type="evidence" value="ECO:0007669"/>
    <property type="project" value="UniProtKB-UniRule"/>
</dbReference>
<dbReference type="GO" id="GO:0046718">
    <property type="term" value="P:symbiont entry into host cell"/>
    <property type="evidence" value="ECO:0007669"/>
    <property type="project" value="UniProtKB-UniRule"/>
</dbReference>
<dbReference type="GO" id="GO:0075732">
    <property type="term" value="P:viral penetration into host nucleus"/>
    <property type="evidence" value="ECO:0007669"/>
    <property type="project" value="UniProtKB-UniRule"/>
</dbReference>
<dbReference type="Gene3D" id="1.10.4090.10">
    <property type="entry name" value="Viral capsid, core domain supefamily, Hepatitis B virus"/>
    <property type="match status" value="1"/>
</dbReference>
<dbReference type="HAMAP" id="MF_04076">
    <property type="entry name" value="HBV_HBEAG"/>
    <property type="match status" value="1"/>
</dbReference>
<dbReference type="InterPro" id="IPR002006">
    <property type="entry name" value="Hepatitis_core"/>
</dbReference>
<dbReference type="InterPro" id="IPR036459">
    <property type="entry name" value="Viral_capsid_core_dom_sf_HBV"/>
</dbReference>
<dbReference type="Pfam" id="PF00906">
    <property type="entry name" value="Hepatitis_core"/>
    <property type="match status" value="2"/>
</dbReference>
<dbReference type="SUPFAM" id="SSF47852">
    <property type="entry name" value="Hepatitis B viral capsid (hbcag)"/>
    <property type="match status" value="1"/>
</dbReference>
<evidence type="ECO:0000255" key="1">
    <source>
        <dbReference type="HAMAP-Rule" id="MF_04076"/>
    </source>
</evidence>
<evidence type="ECO:0000256" key="2">
    <source>
        <dbReference type="SAM" id="MobiDB-lite"/>
    </source>
</evidence>
<name>CAPSD_WHV2</name>
<protein>
    <recommendedName>
        <fullName evidence="1">Capsid protein</fullName>
    </recommendedName>
    <alternativeName>
        <fullName evidence="1">Core antigen</fullName>
    </alternativeName>
    <alternativeName>
        <fullName evidence="1">Core protein</fullName>
    </alternativeName>
    <alternativeName>
        <fullName evidence="1">HBcAg</fullName>
    </alternativeName>
    <alternativeName>
        <fullName evidence="1">p21.5</fullName>
    </alternativeName>
</protein>